<organism>
    <name type="scientific">Thermosipho africanus (strain TCF52B)</name>
    <dbReference type="NCBI Taxonomy" id="484019"/>
    <lineage>
        <taxon>Bacteria</taxon>
        <taxon>Thermotogati</taxon>
        <taxon>Thermotogota</taxon>
        <taxon>Thermotogae</taxon>
        <taxon>Thermotogales</taxon>
        <taxon>Fervidobacteriaceae</taxon>
        <taxon>Thermosipho</taxon>
    </lineage>
</organism>
<name>DNAA_THEAB</name>
<evidence type="ECO:0000255" key="1">
    <source>
        <dbReference type="HAMAP-Rule" id="MF_00377"/>
    </source>
</evidence>
<accession>B7IF65</accession>
<reference key="1">
    <citation type="journal article" date="2009" name="J. Bacteriol.">
        <title>The genome of Thermosipho africanus TCF52B: lateral genetic connections to the Firmicutes and Archaea.</title>
        <authorList>
            <person name="Nesboe C.L."/>
            <person name="Bapteste E."/>
            <person name="Curtis B."/>
            <person name="Dahle H."/>
            <person name="Lopez P."/>
            <person name="Macleod D."/>
            <person name="Dlutek M."/>
            <person name="Bowman S."/>
            <person name="Zhaxybayeva O."/>
            <person name="Birkeland N.-K."/>
            <person name="Doolittle W.F."/>
        </authorList>
    </citation>
    <scope>NUCLEOTIDE SEQUENCE [LARGE SCALE GENOMIC DNA]</scope>
    <source>
        <strain>TCF52B</strain>
    </source>
</reference>
<comment type="function">
    <text evidence="1">Plays an essential role in the initiation and regulation of chromosomal replication. ATP-DnaA binds to the origin of replication (oriC) to initiate formation of the DNA replication initiation complex once per cell cycle. Binds the DnaA box (a 9 base pair repeat at the origin) and separates the double-stranded (ds)DNA. Forms a right-handed helical filament on oriC DNA; dsDNA binds to the exterior of the filament while single-stranded (ss)DNA is stabiized in the filament's interior. The ATP-DnaA-oriC complex binds and stabilizes one strand of the AT-rich DNA unwinding element (DUE), permitting loading of DNA polymerase. After initiation quickly degrades to an ADP-DnaA complex that is not apt for DNA replication. Binds acidic phospholipids.</text>
</comment>
<comment type="subunit">
    <text evidence="1">Oligomerizes as a right-handed, spiral filament on DNA at oriC.</text>
</comment>
<comment type="subcellular location">
    <subcellularLocation>
        <location evidence="1">Cytoplasm</location>
    </subcellularLocation>
</comment>
<comment type="domain">
    <text evidence="1">Domain I is involved in oligomerization and binding regulators, domain II is flexibile and of varying length in different bacteria, domain III forms the AAA+ region, while domain IV binds dsDNA.</text>
</comment>
<comment type="similarity">
    <text evidence="1">Belongs to the DnaA family.</text>
</comment>
<dbReference type="EMBL" id="CP001185">
    <property type="protein sequence ID" value="ACJ74729.1"/>
    <property type="molecule type" value="Genomic_DNA"/>
</dbReference>
<dbReference type="RefSeq" id="WP_004103763.1">
    <property type="nucleotide sequence ID" value="NC_011653.1"/>
</dbReference>
<dbReference type="SMR" id="B7IF65"/>
<dbReference type="STRING" id="484019.THA_224"/>
<dbReference type="KEGG" id="taf:THA_224"/>
<dbReference type="eggNOG" id="COG0593">
    <property type="taxonomic scope" value="Bacteria"/>
</dbReference>
<dbReference type="HOGENOM" id="CLU_026910_3_2_0"/>
<dbReference type="OrthoDB" id="9807019at2"/>
<dbReference type="Proteomes" id="UP000002453">
    <property type="component" value="Chromosome"/>
</dbReference>
<dbReference type="GO" id="GO:0005737">
    <property type="term" value="C:cytoplasm"/>
    <property type="evidence" value="ECO:0007669"/>
    <property type="project" value="UniProtKB-SubCell"/>
</dbReference>
<dbReference type="GO" id="GO:0005886">
    <property type="term" value="C:plasma membrane"/>
    <property type="evidence" value="ECO:0007669"/>
    <property type="project" value="TreeGrafter"/>
</dbReference>
<dbReference type="GO" id="GO:0005524">
    <property type="term" value="F:ATP binding"/>
    <property type="evidence" value="ECO:0007669"/>
    <property type="project" value="UniProtKB-UniRule"/>
</dbReference>
<dbReference type="GO" id="GO:0016887">
    <property type="term" value="F:ATP hydrolysis activity"/>
    <property type="evidence" value="ECO:0007669"/>
    <property type="project" value="InterPro"/>
</dbReference>
<dbReference type="GO" id="GO:0003688">
    <property type="term" value="F:DNA replication origin binding"/>
    <property type="evidence" value="ECO:0007669"/>
    <property type="project" value="UniProtKB-UniRule"/>
</dbReference>
<dbReference type="GO" id="GO:0008289">
    <property type="term" value="F:lipid binding"/>
    <property type="evidence" value="ECO:0007669"/>
    <property type="project" value="UniProtKB-KW"/>
</dbReference>
<dbReference type="GO" id="GO:0006270">
    <property type="term" value="P:DNA replication initiation"/>
    <property type="evidence" value="ECO:0007669"/>
    <property type="project" value="UniProtKB-UniRule"/>
</dbReference>
<dbReference type="GO" id="GO:0006275">
    <property type="term" value="P:regulation of DNA replication"/>
    <property type="evidence" value="ECO:0007669"/>
    <property type="project" value="UniProtKB-UniRule"/>
</dbReference>
<dbReference type="CDD" id="cd00009">
    <property type="entry name" value="AAA"/>
    <property type="match status" value="1"/>
</dbReference>
<dbReference type="CDD" id="cd06571">
    <property type="entry name" value="Bac_DnaA_C"/>
    <property type="match status" value="1"/>
</dbReference>
<dbReference type="FunFam" id="3.40.50.300:FF:000668">
    <property type="entry name" value="Chromosomal replication initiator protein DnaA"/>
    <property type="match status" value="1"/>
</dbReference>
<dbReference type="Gene3D" id="1.10.1750.10">
    <property type="match status" value="1"/>
</dbReference>
<dbReference type="Gene3D" id="1.10.8.60">
    <property type="match status" value="1"/>
</dbReference>
<dbReference type="Gene3D" id="3.30.300.180">
    <property type="match status" value="1"/>
</dbReference>
<dbReference type="Gene3D" id="3.40.50.300">
    <property type="entry name" value="P-loop containing nucleotide triphosphate hydrolases"/>
    <property type="match status" value="1"/>
</dbReference>
<dbReference type="HAMAP" id="MF_00377">
    <property type="entry name" value="DnaA_bact"/>
    <property type="match status" value="1"/>
</dbReference>
<dbReference type="InterPro" id="IPR003593">
    <property type="entry name" value="AAA+_ATPase"/>
</dbReference>
<dbReference type="InterPro" id="IPR001957">
    <property type="entry name" value="Chromosome_initiator_DnaA"/>
</dbReference>
<dbReference type="InterPro" id="IPR020591">
    <property type="entry name" value="Chromosome_initiator_DnaA-like"/>
</dbReference>
<dbReference type="InterPro" id="IPR013159">
    <property type="entry name" value="DnaA_C"/>
</dbReference>
<dbReference type="InterPro" id="IPR013317">
    <property type="entry name" value="DnaA_dom"/>
</dbReference>
<dbReference type="InterPro" id="IPR024633">
    <property type="entry name" value="DnaA_N_dom"/>
</dbReference>
<dbReference type="InterPro" id="IPR038454">
    <property type="entry name" value="DnaA_N_sf"/>
</dbReference>
<dbReference type="InterPro" id="IPR027417">
    <property type="entry name" value="P-loop_NTPase"/>
</dbReference>
<dbReference type="InterPro" id="IPR010921">
    <property type="entry name" value="Trp_repressor/repl_initiator"/>
</dbReference>
<dbReference type="NCBIfam" id="TIGR00362">
    <property type="entry name" value="DnaA"/>
    <property type="match status" value="1"/>
</dbReference>
<dbReference type="NCBIfam" id="NF001154">
    <property type="entry name" value="PRK00149.3-3"/>
    <property type="match status" value="1"/>
</dbReference>
<dbReference type="PANTHER" id="PTHR30050">
    <property type="entry name" value="CHROMOSOMAL REPLICATION INITIATOR PROTEIN DNAA"/>
    <property type="match status" value="1"/>
</dbReference>
<dbReference type="PANTHER" id="PTHR30050:SF2">
    <property type="entry name" value="CHROMOSOMAL REPLICATION INITIATOR PROTEIN DNAA"/>
    <property type="match status" value="1"/>
</dbReference>
<dbReference type="Pfam" id="PF00308">
    <property type="entry name" value="Bac_DnaA"/>
    <property type="match status" value="1"/>
</dbReference>
<dbReference type="Pfam" id="PF08299">
    <property type="entry name" value="Bac_DnaA_C"/>
    <property type="match status" value="1"/>
</dbReference>
<dbReference type="Pfam" id="PF11638">
    <property type="entry name" value="DnaA_N"/>
    <property type="match status" value="1"/>
</dbReference>
<dbReference type="PRINTS" id="PR00051">
    <property type="entry name" value="DNAA"/>
</dbReference>
<dbReference type="SMART" id="SM00382">
    <property type="entry name" value="AAA"/>
    <property type="match status" value="1"/>
</dbReference>
<dbReference type="SMART" id="SM00760">
    <property type="entry name" value="Bac_DnaA_C"/>
    <property type="match status" value="1"/>
</dbReference>
<dbReference type="SUPFAM" id="SSF52540">
    <property type="entry name" value="P-loop containing nucleoside triphosphate hydrolases"/>
    <property type="match status" value="1"/>
</dbReference>
<dbReference type="SUPFAM" id="SSF48295">
    <property type="entry name" value="TrpR-like"/>
    <property type="match status" value="1"/>
</dbReference>
<keyword id="KW-0067">ATP-binding</keyword>
<keyword id="KW-0963">Cytoplasm</keyword>
<keyword id="KW-0235">DNA replication</keyword>
<keyword id="KW-0238">DNA-binding</keyword>
<keyword id="KW-0446">Lipid-binding</keyword>
<keyword id="KW-0547">Nucleotide-binding</keyword>
<keyword id="KW-1185">Reference proteome</keyword>
<protein>
    <recommendedName>
        <fullName evidence="1">Chromosomal replication initiator protein DnaA</fullName>
    </recommendedName>
</protein>
<feature type="chain" id="PRO_1000122028" description="Chromosomal replication initiator protein DnaA">
    <location>
        <begin position="1"/>
        <end position="438"/>
    </location>
</feature>
<feature type="region of interest" description="Domain I, interacts with DnaA modulators" evidence="1">
    <location>
        <begin position="1"/>
        <end position="68"/>
    </location>
</feature>
<feature type="region of interest" description="Domain II" evidence="1">
    <location>
        <begin position="68"/>
        <end position="98"/>
    </location>
</feature>
<feature type="region of interest" description="Domain III, AAA+ region" evidence="1">
    <location>
        <begin position="99"/>
        <end position="314"/>
    </location>
</feature>
<feature type="region of interest" description="Domain IV, binds dsDNA" evidence="1">
    <location>
        <begin position="315"/>
        <end position="438"/>
    </location>
</feature>
<feature type="binding site" evidence="1">
    <location>
        <position position="142"/>
    </location>
    <ligand>
        <name>ATP</name>
        <dbReference type="ChEBI" id="CHEBI:30616"/>
    </ligand>
</feature>
<feature type="binding site" evidence="1">
    <location>
        <position position="144"/>
    </location>
    <ligand>
        <name>ATP</name>
        <dbReference type="ChEBI" id="CHEBI:30616"/>
    </ligand>
</feature>
<feature type="binding site" evidence="1">
    <location>
        <position position="145"/>
    </location>
    <ligand>
        <name>ATP</name>
        <dbReference type="ChEBI" id="CHEBI:30616"/>
    </ligand>
</feature>
<feature type="binding site" evidence="1">
    <location>
        <position position="146"/>
    </location>
    <ligand>
        <name>ATP</name>
        <dbReference type="ChEBI" id="CHEBI:30616"/>
    </ligand>
</feature>
<proteinExistence type="inferred from homology"/>
<sequence length="438" mass="50319">MKDNILSALKEKISRQNWESWFLDFNVKKIEDKHVVFEVGNIFIKDRLEQKFSKIISKVVKESLGKDATFEIVYKEIDITQENEEKGPLVRKRPLLITPLNPKYTFENFVVGNFNRFAYNVFLEASKKPGYYNPIFLYSGVGLGKTHLAQALGNFLLENDPDLKVAYLTSEDFMNEMFYAIKNGTTEEFREKYRKKADILIIDDIQFLIGIKSAQVELFHTFNAIHEAGKQIIICSDRTPQELKDFHSRMISRFQMGLLVKIENPTKEDLFKIGKKISKLKGVEINDEIIDYISSIYDNPRLIHGAILKLIAYKNLYGSLNLSIAQSILTNPSKPPKALEEKLIEILSDIFECSPEEILSSKRTKNISYARKVGMYYAAKKLNLSTRDVGKVFNKSHSSVVQNISQVEKLIKEGNIIIKNYLKQIDKATKNFAQGESI</sequence>
<gene>
    <name evidence="1" type="primary">dnaA</name>
    <name type="ordered locus">THA_224</name>
</gene>